<reference key="1">
    <citation type="journal article" date="1997" name="Oncogene">
        <title>ERF: genomic organization, chromosomal localization and promoter analysis of the human and mouse genes.</title>
        <authorList>
            <person name="Liu D."/>
            <person name="Pavlopoulos E."/>
            <person name="Modi W."/>
            <person name="Moschonas N."/>
            <person name="Mavrothalassitis G.J."/>
        </authorList>
    </citation>
    <scope>NUCLEOTIDE SEQUENCE [GENOMIC DNA]</scope>
    <source>
        <strain>129/SvJ</strain>
    </source>
</reference>
<reference key="2">
    <citation type="journal article" date="2005" name="Science">
        <title>The transcriptional landscape of the mammalian genome.</title>
        <authorList>
            <person name="Carninci P."/>
            <person name="Kasukawa T."/>
            <person name="Katayama S."/>
            <person name="Gough J."/>
            <person name="Frith M.C."/>
            <person name="Maeda N."/>
            <person name="Oyama R."/>
            <person name="Ravasi T."/>
            <person name="Lenhard B."/>
            <person name="Wells C."/>
            <person name="Kodzius R."/>
            <person name="Shimokawa K."/>
            <person name="Bajic V.B."/>
            <person name="Brenner S.E."/>
            <person name="Batalov S."/>
            <person name="Forrest A.R."/>
            <person name="Zavolan M."/>
            <person name="Davis M.J."/>
            <person name="Wilming L.G."/>
            <person name="Aidinis V."/>
            <person name="Allen J.E."/>
            <person name="Ambesi-Impiombato A."/>
            <person name="Apweiler R."/>
            <person name="Aturaliya R.N."/>
            <person name="Bailey T.L."/>
            <person name="Bansal M."/>
            <person name="Baxter L."/>
            <person name="Beisel K.W."/>
            <person name="Bersano T."/>
            <person name="Bono H."/>
            <person name="Chalk A.M."/>
            <person name="Chiu K.P."/>
            <person name="Choudhary V."/>
            <person name="Christoffels A."/>
            <person name="Clutterbuck D.R."/>
            <person name="Crowe M.L."/>
            <person name="Dalla E."/>
            <person name="Dalrymple B.P."/>
            <person name="de Bono B."/>
            <person name="Della Gatta G."/>
            <person name="di Bernardo D."/>
            <person name="Down T."/>
            <person name="Engstrom P."/>
            <person name="Fagiolini M."/>
            <person name="Faulkner G."/>
            <person name="Fletcher C.F."/>
            <person name="Fukushima T."/>
            <person name="Furuno M."/>
            <person name="Futaki S."/>
            <person name="Gariboldi M."/>
            <person name="Georgii-Hemming P."/>
            <person name="Gingeras T.R."/>
            <person name="Gojobori T."/>
            <person name="Green R.E."/>
            <person name="Gustincich S."/>
            <person name="Harbers M."/>
            <person name="Hayashi Y."/>
            <person name="Hensch T.K."/>
            <person name="Hirokawa N."/>
            <person name="Hill D."/>
            <person name="Huminiecki L."/>
            <person name="Iacono M."/>
            <person name="Ikeo K."/>
            <person name="Iwama A."/>
            <person name="Ishikawa T."/>
            <person name="Jakt M."/>
            <person name="Kanapin A."/>
            <person name="Katoh M."/>
            <person name="Kawasawa Y."/>
            <person name="Kelso J."/>
            <person name="Kitamura H."/>
            <person name="Kitano H."/>
            <person name="Kollias G."/>
            <person name="Krishnan S.P."/>
            <person name="Kruger A."/>
            <person name="Kummerfeld S.K."/>
            <person name="Kurochkin I.V."/>
            <person name="Lareau L.F."/>
            <person name="Lazarevic D."/>
            <person name="Lipovich L."/>
            <person name="Liu J."/>
            <person name="Liuni S."/>
            <person name="McWilliam S."/>
            <person name="Madan Babu M."/>
            <person name="Madera M."/>
            <person name="Marchionni L."/>
            <person name="Matsuda H."/>
            <person name="Matsuzawa S."/>
            <person name="Miki H."/>
            <person name="Mignone F."/>
            <person name="Miyake S."/>
            <person name="Morris K."/>
            <person name="Mottagui-Tabar S."/>
            <person name="Mulder N."/>
            <person name="Nakano N."/>
            <person name="Nakauchi H."/>
            <person name="Ng P."/>
            <person name="Nilsson R."/>
            <person name="Nishiguchi S."/>
            <person name="Nishikawa S."/>
            <person name="Nori F."/>
            <person name="Ohara O."/>
            <person name="Okazaki Y."/>
            <person name="Orlando V."/>
            <person name="Pang K.C."/>
            <person name="Pavan W.J."/>
            <person name="Pavesi G."/>
            <person name="Pesole G."/>
            <person name="Petrovsky N."/>
            <person name="Piazza S."/>
            <person name="Reed J."/>
            <person name="Reid J.F."/>
            <person name="Ring B.Z."/>
            <person name="Ringwald M."/>
            <person name="Rost B."/>
            <person name="Ruan Y."/>
            <person name="Salzberg S.L."/>
            <person name="Sandelin A."/>
            <person name="Schneider C."/>
            <person name="Schoenbach C."/>
            <person name="Sekiguchi K."/>
            <person name="Semple C.A."/>
            <person name="Seno S."/>
            <person name="Sessa L."/>
            <person name="Sheng Y."/>
            <person name="Shibata Y."/>
            <person name="Shimada H."/>
            <person name="Shimada K."/>
            <person name="Silva D."/>
            <person name="Sinclair B."/>
            <person name="Sperling S."/>
            <person name="Stupka E."/>
            <person name="Sugiura K."/>
            <person name="Sultana R."/>
            <person name="Takenaka Y."/>
            <person name="Taki K."/>
            <person name="Tammoja K."/>
            <person name="Tan S.L."/>
            <person name="Tang S."/>
            <person name="Taylor M.S."/>
            <person name="Tegner J."/>
            <person name="Teichmann S.A."/>
            <person name="Ueda H.R."/>
            <person name="van Nimwegen E."/>
            <person name="Verardo R."/>
            <person name="Wei C.L."/>
            <person name="Yagi K."/>
            <person name="Yamanishi H."/>
            <person name="Zabarovsky E."/>
            <person name="Zhu S."/>
            <person name="Zimmer A."/>
            <person name="Hide W."/>
            <person name="Bult C."/>
            <person name="Grimmond S.M."/>
            <person name="Teasdale R.D."/>
            <person name="Liu E.T."/>
            <person name="Brusic V."/>
            <person name="Quackenbush J."/>
            <person name="Wahlestedt C."/>
            <person name="Mattick J.S."/>
            <person name="Hume D.A."/>
            <person name="Kai C."/>
            <person name="Sasaki D."/>
            <person name="Tomaru Y."/>
            <person name="Fukuda S."/>
            <person name="Kanamori-Katayama M."/>
            <person name="Suzuki M."/>
            <person name="Aoki J."/>
            <person name="Arakawa T."/>
            <person name="Iida J."/>
            <person name="Imamura K."/>
            <person name="Itoh M."/>
            <person name="Kato T."/>
            <person name="Kawaji H."/>
            <person name="Kawagashira N."/>
            <person name="Kawashima T."/>
            <person name="Kojima M."/>
            <person name="Kondo S."/>
            <person name="Konno H."/>
            <person name="Nakano K."/>
            <person name="Ninomiya N."/>
            <person name="Nishio T."/>
            <person name="Okada M."/>
            <person name="Plessy C."/>
            <person name="Shibata K."/>
            <person name="Shiraki T."/>
            <person name="Suzuki S."/>
            <person name="Tagami M."/>
            <person name="Waki K."/>
            <person name="Watahiki A."/>
            <person name="Okamura-Oho Y."/>
            <person name="Suzuki H."/>
            <person name="Kawai J."/>
            <person name="Hayashizaki Y."/>
        </authorList>
    </citation>
    <scope>NUCLEOTIDE SEQUENCE [LARGE SCALE MRNA]</scope>
    <source>
        <strain>C57BL/6J</strain>
    </source>
</reference>
<reference key="3">
    <citation type="submission" date="2005-07" db="EMBL/GenBank/DDBJ databases">
        <authorList>
            <person name="Mural R.J."/>
            <person name="Adams M.D."/>
            <person name="Myers E.W."/>
            <person name="Smith H.O."/>
            <person name="Venter J.C."/>
        </authorList>
    </citation>
    <scope>NUCLEOTIDE SEQUENCE [LARGE SCALE GENOMIC DNA]</scope>
</reference>
<reference key="4">
    <citation type="journal article" date="2004" name="Genome Res.">
        <title>The status, quality, and expansion of the NIH full-length cDNA project: the Mammalian Gene Collection (MGC).</title>
        <authorList>
            <consortium name="The MGC Project Team"/>
        </authorList>
    </citation>
    <scope>NUCLEOTIDE SEQUENCE [LARGE SCALE MRNA]</scope>
    <source>
        <strain>C57BL/6J</strain>
        <tissue>Brain</tissue>
        <tissue>Jaw</tissue>
    </source>
</reference>
<reference key="5">
    <citation type="journal article" date="2007" name="Mol. Cell. Biol.">
        <title>Transcriptional repressor erf determines extraembryonic ectoderm differentiation.</title>
        <authorList>
            <person name="Papadaki C."/>
            <person name="Alexiou M."/>
            <person name="Cecena G."/>
            <person name="Verykokakis M."/>
            <person name="Bilitou A."/>
            <person name="Cross J.C."/>
            <person name="Oshima R.G."/>
            <person name="Mavrothalassitis G."/>
        </authorList>
    </citation>
    <scope>FUNCTION</scope>
    <scope>DEVELOPMENTAL STAGE</scope>
    <scope>DISRUPTION PHENOTYPE</scope>
</reference>
<reference key="6">
    <citation type="journal article" date="2010" name="Cell">
        <title>A tissue-specific atlas of mouse protein phosphorylation and expression.</title>
        <authorList>
            <person name="Huttlin E.L."/>
            <person name="Jedrychowski M.P."/>
            <person name="Elias J.E."/>
            <person name="Goswami T."/>
            <person name="Rad R."/>
            <person name="Beausoleil S.A."/>
            <person name="Villen J."/>
            <person name="Haas W."/>
            <person name="Sowa M.E."/>
            <person name="Gygi S.P."/>
        </authorList>
    </citation>
    <scope>IDENTIFICATION BY MASS SPECTROMETRY [LARGE SCALE ANALYSIS]</scope>
    <source>
        <tissue>Heart</tissue>
        <tissue>Kidney</tissue>
        <tissue>Spleen</tissue>
    </source>
</reference>
<reference key="7">
    <citation type="journal article" date="2013" name="Nat. Genet.">
        <title>Reduced dosage of ERF causes complex craniosynostosis in humans and mice and links ERK1/2 signaling to regulation of osteogenesis.</title>
        <authorList>
            <person name="Twigg S.R."/>
            <person name="Vorgia E."/>
            <person name="McGowan S.J."/>
            <person name="Peraki I."/>
            <person name="Fenwick A.L."/>
            <person name="Sharma V.P."/>
            <person name="Allegra M."/>
            <person name="Zaragkoulias A."/>
            <person name="Sadighi Akha E."/>
            <person name="Knight S.J."/>
            <person name="Lord H."/>
            <person name="Lester T."/>
            <person name="Izatt L."/>
            <person name="Lampe A.K."/>
            <person name="Mohammed S.N."/>
            <person name="Stewart F.J."/>
            <person name="Verloes A."/>
            <person name="Wilson L.C."/>
            <person name="Healy C."/>
            <person name="Sharpe P.T."/>
            <person name="Hammond P."/>
            <person name="Hughes J."/>
            <person name="Taylor S."/>
            <person name="Johnson D."/>
            <person name="Wall S.A."/>
            <person name="Mavrothalassitis G."/>
            <person name="Wilkie A.O."/>
        </authorList>
    </citation>
    <scope>TISSUE SPECIFICITY</scope>
</reference>
<organism>
    <name type="scientific">Mus musculus</name>
    <name type="common">Mouse</name>
    <dbReference type="NCBI Taxonomy" id="10090"/>
    <lineage>
        <taxon>Eukaryota</taxon>
        <taxon>Metazoa</taxon>
        <taxon>Chordata</taxon>
        <taxon>Craniata</taxon>
        <taxon>Vertebrata</taxon>
        <taxon>Euteleostomi</taxon>
        <taxon>Mammalia</taxon>
        <taxon>Eutheria</taxon>
        <taxon>Euarchontoglires</taxon>
        <taxon>Glires</taxon>
        <taxon>Rodentia</taxon>
        <taxon>Myomorpha</taxon>
        <taxon>Muroidea</taxon>
        <taxon>Muridae</taxon>
        <taxon>Murinae</taxon>
        <taxon>Mus</taxon>
        <taxon>Mus</taxon>
    </lineage>
</organism>
<sequence>MKTPADTGFAFPDWAYKPESSPGSRQIQLWHFILELLRKEEYQGVIAWQGDYGEFVIKDPDEVARLWGVRKCKPQMNYDKLSRALRYYYNKRILHKTKGKRFTYKFNFNKLVLVNYPFIDMGLAGGAVPQSAPPVPSGGSHFRFPPSTPSEVLSPTEDPRSPPACSSSSSSLFSAVVARRLGRGSVSDCSDGTSELEEPLGEDPRARPPGPPELGAFRGPPLARLPHDPGVFRVYPRPRGGPEPLSPFPVSPLAGPGSLLPPQLSPALPMTPTHLAYTPSPTLSPMYPSGGGGPSGSGGGSHFSFSPEDMKRYLQAHTQSVYNYHLSPRAFLHYPGLVVPQPQRPDKCPLPPMAPETPPVPSSASSSSSSSSSPFKFKLQPPPLGRRQRAAGEKAPGGTDKSSGGSGSGGLAEGAGAVAPPPPPPQIKVEPISEGESEEVEVTDISDEDEEDGEVFKTPRAPPAPPKPEPGEAPGVAQCMPLKLRFKRRWSEDCRLEGGGCLSGGPEDEGEDKKVRGDVGPGESGGPLTPRRVSSDLQHATAQLSLEHRDS</sequence>
<gene>
    <name type="primary">Erf</name>
</gene>
<dbReference type="EMBL" id="U58533">
    <property type="protein sequence ID" value="AAC09474.1"/>
    <property type="molecule type" value="Genomic_DNA"/>
</dbReference>
<dbReference type="EMBL" id="U58534">
    <property type="protein sequence ID" value="AAC09474.1"/>
    <property type="status" value="JOINED"/>
    <property type="molecule type" value="Genomic_DNA"/>
</dbReference>
<dbReference type="EMBL" id="AK159225">
    <property type="protein sequence ID" value="BAE34912.1"/>
    <property type="molecule type" value="mRNA"/>
</dbReference>
<dbReference type="EMBL" id="CH466593">
    <property type="protein sequence ID" value="EDL24284.1"/>
    <property type="molecule type" value="Genomic_DNA"/>
</dbReference>
<dbReference type="EMBL" id="BC053045">
    <property type="protein sequence ID" value="AAH53045.1"/>
    <property type="status" value="ALT_INIT"/>
    <property type="molecule type" value="mRNA"/>
</dbReference>
<dbReference type="EMBL" id="BC059176">
    <property type="protein sequence ID" value="AAH59176.1"/>
    <property type="status" value="ALT_INIT"/>
    <property type="molecule type" value="mRNA"/>
</dbReference>
<dbReference type="EMBL" id="BC063092">
    <property type="protein sequence ID" value="AAH63092.1"/>
    <property type="molecule type" value="mRNA"/>
</dbReference>
<dbReference type="CCDS" id="CCDS20978.1"/>
<dbReference type="RefSeq" id="NP_034285.3">
    <property type="nucleotide sequence ID" value="NM_010155.3"/>
</dbReference>
<dbReference type="SMR" id="P70459"/>
<dbReference type="BioGRID" id="199503">
    <property type="interactions" value="1"/>
</dbReference>
<dbReference type="FunCoup" id="P70459">
    <property type="interactions" value="1398"/>
</dbReference>
<dbReference type="STRING" id="10090.ENSMUSP00000041912"/>
<dbReference type="GlyGen" id="P70459">
    <property type="glycosylation" value="1 site, 1 O-linked glycan (1 site)"/>
</dbReference>
<dbReference type="iPTMnet" id="P70459"/>
<dbReference type="PhosphoSitePlus" id="P70459"/>
<dbReference type="jPOST" id="P70459"/>
<dbReference type="PaxDb" id="10090-ENSMUSP00000041912"/>
<dbReference type="PeptideAtlas" id="P70459"/>
<dbReference type="ProteomicsDB" id="275940"/>
<dbReference type="Pumba" id="P70459"/>
<dbReference type="DNASU" id="13875"/>
<dbReference type="GeneID" id="13875"/>
<dbReference type="KEGG" id="mmu:13875"/>
<dbReference type="UCSC" id="uc009frz.2">
    <property type="organism name" value="mouse"/>
</dbReference>
<dbReference type="AGR" id="MGI:109637"/>
<dbReference type="CTD" id="2077"/>
<dbReference type="MGI" id="MGI:109637">
    <property type="gene designation" value="Erf"/>
</dbReference>
<dbReference type="eggNOG" id="KOG3806">
    <property type="taxonomic scope" value="Eukaryota"/>
</dbReference>
<dbReference type="InParanoid" id="P70459"/>
<dbReference type="OrthoDB" id="10067219at2759"/>
<dbReference type="PhylomeDB" id="P70459"/>
<dbReference type="TreeFam" id="TF351065"/>
<dbReference type="Reactome" id="R-MMU-2559585">
    <property type="pathway name" value="Oncogene Induced Senescence"/>
</dbReference>
<dbReference type="BioGRID-ORCS" id="13875">
    <property type="hits" value="0 hits in 80 CRISPR screens"/>
</dbReference>
<dbReference type="ChiTaRS" id="Erf">
    <property type="organism name" value="mouse"/>
</dbReference>
<dbReference type="PRO" id="PR:P70459"/>
<dbReference type="Proteomes" id="UP000000589">
    <property type="component" value="Unplaced"/>
</dbReference>
<dbReference type="RNAct" id="P70459">
    <property type="molecule type" value="protein"/>
</dbReference>
<dbReference type="GO" id="GO:0005634">
    <property type="term" value="C:nucleus"/>
    <property type="evidence" value="ECO:0000314"/>
    <property type="project" value="MGI"/>
</dbReference>
<dbReference type="GO" id="GO:0003700">
    <property type="term" value="F:DNA-binding transcription factor activity"/>
    <property type="evidence" value="ECO:0007669"/>
    <property type="project" value="InterPro"/>
</dbReference>
<dbReference type="GO" id="GO:0043565">
    <property type="term" value="F:sequence-specific DNA binding"/>
    <property type="evidence" value="ECO:0007669"/>
    <property type="project" value="InterPro"/>
</dbReference>
<dbReference type="GO" id="GO:0060710">
    <property type="term" value="P:chorio-allantoic fusion"/>
    <property type="evidence" value="ECO:0000315"/>
    <property type="project" value="MGI"/>
</dbReference>
<dbReference type="GO" id="GO:0010668">
    <property type="term" value="P:ectodermal cell differentiation"/>
    <property type="evidence" value="ECO:0000315"/>
    <property type="project" value="MGI"/>
</dbReference>
<dbReference type="GO" id="GO:0001701">
    <property type="term" value="P:in utero embryonic development"/>
    <property type="evidence" value="ECO:0000315"/>
    <property type="project" value="MGI"/>
</dbReference>
<dbReference type="GO" id="GO:0006357">
    <property type="term" value="P:regulation of transcription by RNA polymerase II"/>
    <property type="evidence" value="ECO:0007669"/>
    <property type="project" value="InterPro"/>
</dbReference>
<dbReference type="GO" id="GO:0060707">
    <property type="term" value="P:trophoblast giant cell differentiation"/>
    <property type="evidence" value="ECO:0000315"/>
    <property type="project" value="MGI"/>
</dbReference>
<dbReference type="FunFam" id="1.10.10.10:FF:000059">
    <property type="entry name" value="ETS translocation variant 3"/>
    <property type="match status" value="1"/>
</dbReference>
<dbReference type="Gene3D" id="1.10.10.10">
    <property type="entry name" value="Winged helix-like DNA-binding domain superfamily/Winged helix DNA-binding domain"/>
    <property type="match status" value="1"/>
</dbReference>
<dbReference type="InterPro" id="IPR000418">
    <property type="entry name" value="Ets_dom"/>
</dbReference>
<dbReference type="InterPro" id="IPR046328">
    <property type="entry name" value="ETS_fam"/>
</dbReference>
<dbReference type="InterPro" id="IPR036388">
    <property type="entry name" value="WH-like_DNA-bd_sf"/>
</dbReference>
<dbReference type="InterPro" id="IPR036390">
    <property type="entry name" value="WH_DNA-bd_sf"/>
</dbReference>
<dbReference type="PANTHER" id="PTHR11849">
    <property type="entry name" value="ETS"/>
    <property type="match status" value="1"/>
</dbReference>
<dbReference type="PANTHER" id="PTHR11849:SF31">
    <property type="entry name" value="ETS DOMAIN-CONTAINING TRANSCRIPTION FACTOR ERF"/>
    <property type="match status" value="1"/>
</dbReference>
<dbReference type="Pfam" id="PF00178">
    <property type="entry name" value="Ets"/>
    <property type="match status" value="1"/>
</dbReference>
<dbReference type="PRINTS" id="PR00454">
    <property type="entry name" value="ETSDOMAIN"/>
</dbReference>
<dbReference type="SMART" id="SM00413">
    <property type="entry name" value="ETS"/>
    <property type="match status" value="1"/>
</dbReference>
<dbReference type="SUPFAM" id="SSF46785">
    <property type="entry name" value="Winged helix' DNA-binding domain"/>
    <property type="match status" value="1"/>
</dbReference>
<dbReference type="PROSITE" id="PS00345">
    <property type="entry name" value="ETS_DOMAIN_1"/>
    <property type="match status" value="1"/>
</dbReference>
<dbReference type="PROSITE" id="PS00346">
    <property type="entry name" value="ETS_DOMAIN_2"/>
    <property type="match status" value="1"/>
</dbReference>
<dbReference type="PROSITE" id="PS50061">
    <property type="entry name" value="ETS_DOMAIN_3"/>
    <property type="match status" value="1"/>
</dbReference>
<keyword id="KW-0238">DNA-binding</keyword>
<keyword id="KW-1017">Isopeptide bond</keyword>
<keyword id="KW-0539">Nucleus</keyword>
<keyword id="KW-0597">Phosphoprotein</keyword>
<keyword id="KW-1185">Reference proteome</keyword>
<keyword id="KW-0678">Repressor</keyword>
<keyword id="KW-0804">Transcription</keyword>
<keyword id="KW-0805">Transcription regulation</keyword>
<keyword id="KW-0832">Ubl conjugation</keyword>
<protein>
    <recommendedName>
        <fullName>ETS domain-containing transcription factor ERF</fullName>
    </recommendedName>
</protein>
<feature type="chain" id="PRO_0000204102" description="ETS domain-containing transcription factor ERF">
    <location>
        <begin position="1"/>
        <end position="551"/>
    </location>
</feature>
<feature type="DNA-binding region" description="ETS" evidence="3">
    <location>
        <begin position="27"/>
        <end position="107"/>
    </location>
</feature>
<feature type="region of interest" description="Disordered" evidence="4">
    <location>
        <begin position="130"/>
        <end position="169"/>
    </location>
</feature>
<feature type="region of interest" description="Disordered" evidence="4">
    <location>
        <begin position="184"/>
        <end position="304"/>
    </location>
</feature>
<feature type="region of interest" description="Disordered" evidence="4">
    <location>
        <begin position="342"/>
        <end position="476"/>
    </location>
</feature>
<feature type="region of interest" description="Disordered" evidence="4">
    <location>
        <begin position="495"/>
        <end position="551"/>
    </location>
</feature>
<feature type="compositionally biased region" description="Pro residues" evidence="4">
    <location>
        <begin position="239"/>
        <end position="250"/>
    </location>
</feature>
<feature type="compositionally biased region" description="Low complexity" evidence="4">
    <location>
        <begin position="251"/>
        <end position="268"/>
    </location>
</feature>
<feature type="compositionally biased region" description="Gly residues" evidence="4">
    <location>
        <begin position="289"/>
        <end position="301"/>
    </location>
</feature>
<feature type="compositionally biased region" description="Pro residues" evidence="4">
    <location>
        <begin position="348"/>
        <end position="361"/>
    </location>
</feature>
<feature type="compositionally biased region" description="Low complexity" evidence="4">
    <location>
        <begin position="362"/>
        <end position="373"/>
    </location>
</feature>
<feature type="compositionally biased region" description="Gly residues" evidence="4">
    <location>
        <begin position="404"/>
        <end position="413"/>
    </location>
</feature>
<feature type="compositionally biased region" description="Acidic residues" evidence="4">
    <location>
        <begin position="433"/>
        <end position="453"/>
    </location>
</feature>
<feature type="compositionally biased region" description="Polar residues" evidence="4">
    <location>
        <begin position="535"/>
        <end position="544"/>
    </location>
</feature>
<feature type="modified residue" description="Phosphothreonine" evidence="2">
    <location>
        <position position="3"/>
    </location>
</feature>
<feature type="modified residue" description="Phosphothreonine" evidence="2">
    <location>
        <position position="7"/>
    </location>
</feature>
<feature type="modified residue" description="Phosphoserine" evidence="2">
    <location>
        <position position="20"/>
    </location>
</feature>
<feature type="modified residue" description="Phosphoserine" evidence="2">
    <location>
        <position position="24"/>
    </location>
</feature>
<feature type="modified residue" description="Phosphoserine" evidence="2">
    <location>
        <position position="185"/>
    </location>
</feature>
<feature type="modified residue" description="Phosphoserine" evidence="2">
    <location>
        <position position="190"/>
    </location>
</feature>
<feature type="modified residue" description="Phosphoserine" evidence="2">
    <location>
        <position position="327"/>
    </location>
</feature>
<feature type="modified residue" description="Phosphoserine" evidence="2">
    <location>
        <position position="433"/>
    </location>
</feature>
<feature type="modified residue" description="Phosphoserine" evidence="2">
    <location>
        <position position="437"/>
    </location>
</feature>
<feature type="modified residue" description="Phosphothreonine" evidence="2">
    <location>
        <position position="443"/>
    </location>
</feature>
<feature type="modified residue" description="Phosphoserine" evidence="2">
    <location>
        <position position="446"/>
    </location>
</feature>
<feature type="modified residue" description="Phosphothreonine; by MAPK1" evidence="2">
    <location>
        <position position="529"/>
    </location>
</feature>
<feature type="modified residue" description="Phosphoserine" evidence="2">
    <location>
        <position position="534"/>
    </location>
</feature>
<feature type="modified residue" description="Phosphoserine" evidence="2">
    <location>
        <position position="535"/>
    </location>
</feature>
<feature type="modified residue" description="Phosphoserine" evidence="2">
    <location>
        <position position="551"/>
    </location>
</feature>
<feature type="cross-link" description="Glycyl lysine isopeptide (Lys-Gly) (interchain with G-Cter in SUMO2)" evidence="2">
    <location>
        <position position="467"/>
    </location>
</feature>
<feature type="cross-link" description="Glycyl lysine isopeptide (Lys-Gly) (interchain with G-Cter in SUMO2)" evidence="2">
    <location>
        <position position="483"/>
    </location>
</feature>
<feature type="cross-link" description="Glycyl lysine isopeptide (Lys-Gly) (interchain with G-Cter in SUMO2)" evidence="2">
    <location>
        <position position="514"/>
    </location>
</feature>
<feature type="sequence conflict" description="In Ref. 4; AAH63092." evidence="7" ref="4">
    <original>G</original>
    <variation>V</variation>
    <location>
        <position position="68"/>
    </location>
</feature>
<feature type="sequence conflict" description="In Ref. 4; AAH59176/AAH53045." evidence="7" ref="4">
    <original>P</original>
    <variation>S</variation>
    <location>
        <position position="134"/>
    </location>
</feature>
<feature type="sequence conflict" description="In Ref. 2; BAE34912, 3; EDL24284 and 4; AAH59176/AAH53045/AAH63092." evidence="7" ref="2 3 4">
    <original>P</original>
    <variation>L</variation>
    <location>
        <position position="396"/>
    </location>
</feature>
<accession>P70459</accession>
<accession>Q3TXK4</accession>
<accession>Q6P544</accession>
<accession>Q7TSJ1</accession>
<name>ERF_MOUSE</name>
<evidence type="ECO:0000250" key="1"/>
<evidence type="ECO:0000250" key="2">
    <source>
        <dbReference type="UniProtKB" id="P50548"/>
    </source>
</evidence>
<evidence type="ECO:0000255" key="3">
    <source>
        <dbReference type="PROSITE-ProRule" id="PRU00237"/>
    </source>
</evidence>
<evidence type="ECO:0000256" key="4">
    <source>
        <dbReference type="SAM" id="MobiDB-lite"/>
    </source>
</evidence>
<evidence type="ECO:0000269" key="5">
    <source>
    </source>
</evidence>
<evidence type="ECO:0000269" key="6">
    <source>
    </source>
</evidence>
<evidence type="ECO:0000305" key="7"/>
<comment type="function">
    <text evidence="1 5">Potent transcriptional repressor that binds to the H1 element of the Ets2 promoter. May regulate other genes involved in cellular proliferation (By similarity). Required for extraembryonic ectoderm differentiation, ectoplacental cone cavity closure, and chorioallantoic attachment. May be important for regulating trophoblast stem cell differentiation.</text>
</comment>
<comment type="subcellular location">
    <subcellularLocation>
        <location>Nucleus</location>
    </subcellularLocation>
</comment>
<comment type="tissue specificity">
    <text evidence="6">Expressed along the osteogenic margins of the developing calvarial bones, in a similar distribution to that observed for the master osteogenic regulator RUNX2.</text>
</comment>
<comment type="developmental stage">
    <text evidence="5">Expressed throughout embryonic development and adulthood. In the developing placenta, after 7.5 dpc expression is restricted to the extraembryonic ectoderm, and after 9.5 dpc to subpopulation of labyrinth cells.</text>
</comment>
<comment type="PTM">
    <text evidence="1">Phosphorylated by multiple kinases including MAPK1/ERK2 at THR-529. Phosphorylation regulates the activity of ERF (By similarity).</text>
</comment>
<comment type="disruption phenotype">
    <text evidence="5">Mice fail to undergo chorioallantoic attachment and labyrinth development and die in utero due to severe placenta defects.</text>
</comment>
<comment type="similarity">
    <text evidence="7">Belongs to the ETS family.</text>
</comment>
<comment type="sequence caution" evidence="7">
    <conflict type="erroneous initiation">
        <sequence resource="EMBL-CDS" id="AAH53045"/>
    </conflict>
    <text>Extended N-terminus.</text>
</comment>
<comment type="sequence caution" evidence="7">
    <conflict type="erroneous initiation">
        <sequence resource="EMBL-CDS" id="AAH59176"/>
    </conflict>
    <text>Extended N-terminus.</text>
</comment>
<proteinExistence type="evidence at protein level"/>